<proteinExistence type="inferred from homology"/>
<protein>
    <recommendedName>
        <fullName evidence="1">Ribosome maturation factor RimM</fullName>
    </recommendedName>
</protein>
<name>RIMM_ECO8A</name>
<keyword id="KW-0143">Chaperone</keyword>
<keyword id="KW-0963">Cytoplasm</keyword>
<keyword id="KW-0690">Ribosome biogenesis</keyword>
<keyword id="KW-0698">rRNA processing</keyword>
<feature type="chain" id="PRO_1000196561" description="Ribosome maturation factor RimM">
    <location>
        <begin position="1"/>
        <end position="182"/>
    </location>
</feature>
<feature type="domain" description="PRC barrel" evidence="1">
    <location>
        <begin position="102"/>
        <end position="182"/>
    </location>
</feature>
<evidence type="ECO:0000255" key="1">
    <source>
        <dbReference type="HAMAP-Rule" id="MF_00014"/>
    </source>
</evidence>
<sequence length="182" mass="20605">MSKQLTAQAPVDPIVLGKMGSSYGIRGWLRVFSSTEDAESIFDYQPWFIQKAGQWQQVQLESWKHHNQDMIIKLKGVDDRDAANLLTNCEIVVDSSQLPQLEEGDYYWKDLMGCQVVTTEGYDLGKVVDMMETGSNDVLVIKANLKDAFGIKERLVPFLDGQVIKKVDLTTRSIEVDWDPGF</sequence>
<reference key="1">
    <citation type="journal article" date="2009" name="PLoS Genet.">
        <title>Organised genome dynamics in the Escherichia coli species results in highly diverse adaptive paths.</title>
        <authorList>
            <person name="Touchon M."/>
            <person name="Hoede C."/>
            <person name="Tenaillon O."/>
            <person name="Barbe V."/>
            <person name="Baeriswyl S."/>
            <person name="Bidet P."/>
            <person name="Bingen E."/>
            <person name="Bonacorsi S."/>
            <person name="Bouchier C."/>
            <person name="Bouvet O."/>
            <person name="Calteau A."/>
            <person name="Chiapello H."/>
            <person name="Clermont O."/>
            <person name="Cruveiller S."/>
            <person name="Danchin A."/>
            <person name="Diard M."/>
            <person name="Dossat C."/>
            <person name="Karoui M.E."/>
            <person name="Frapy E."/>
            <person name="Garry L."/>
            <person name="Ghigo J.M."/>
            <person name="Gilles A.M."/>
            <person name="Johnson J."/>
            <person name="Le Bouguenec C."/>
            <person name="Lescat M."/>
            <person name="Mangenot S."/>
            <person name="Martinez-Jehanne V."/>
            <person name="Matic I."/>
            <person name="Nassif X."/>
            <person name="Oztas S."/>
            <person name="Petit M.A."/>
            <person name="Pichon C."/>
            <person name="Rouy Z."/>
            <person name="Ruf C.S."/>
            <person name="Schneider D."/>
            <person name="Tourret J."/>
            <person name="Vacherie B."/>
            <person name="Vallenet D."/>
            <person name="Medigue C."/>
            <person name="Rocha E.P.C."/>
            <person name="Denamur E."/>
        </authorList>
    </citation>
    <scope>NUCLEOTIDE SEQUENCE [LARGE SCALE GENOMIC DNA]</scope>
    <source>
        <strain>IAI1</strain>
    </source>
</reference>
<gene>
    <name evidence="1" type="primary">rimM</name>
    <name type="ordered locus">ECIAI1_2729</name>
</gene>
<accession>B7M977</accession>
<dbReference type="EMBL" id="CU928160">
    <property type="protein sequence ID" value="CAQ99556.1"/>
    <property type="molecule type" value="Genomic_DNA"/>
</dbReference>
<dbReference type="RefSeq" id="WP_000043335.1">
    <property type="nucleotide sequence ID" value="NC_011741.1"/>
</dbReference>
<dbReference type="SMR" id="B7M977"/>
<dbReference type="GeneID" id="93774458"/>
<dbReference type="KEGG" id="ecr:ECIAI1_2729"/>
<dbReference type="HOGENOM" id="CLU_077636_1_0_6"/>
<dbReference type="GO" id="GO:0005737">
    <property type="term" value="C:cytoplasm"/>
    <property type="evidence" value="ECO:0007669"/>
    <property type="project" value="UniProtKB-SubCell"/>
</dbReference>
<dbReference type="GO" id="GO:0005840">
    <property type="term" value="C:ribosome"/>
    <property type="evidence" value="ECO:0007669"/>
    <property type="project" value="InterPro"/>
</dbReference>
<dbReference type="GO" id="GO:0043022">
    <property type="term" value="F:ribosome binding"/>
    <property type="evidence" value="ECO:0007669"/>
    <property type="project" value="InterPro"/>
</dbReference>
<dbReference type="GO" id="GO:0042274">
    <property type="term" value="P:ribosomal small subunit biogenesis"/>
    <property type="evidence" value="ECO:0007669"/>
    <property type="project" value="UniProtKB-UniRule"/>
</dbReference>
<dbReference type="GO" id="GO:0006364">
    <property type="term" value="P:rRNA processing"/>
    <property type="evidence" value="ECO:0007669"/>
    <property type="project" value="UniProtKB-UniRule"/>
</dbReference>
<dbReference type="FunFam" id="2.30.30.240:FF:000001">
    <property type="entry name" value="Ribosome maturation factor RimM"/>
    <property type="match status" value="1"/>
</dbReference>
<dbReference type="FunFam" id="2.40.30.60:FF:000001">
    <property type="entry name" value="Ribosome maturation factor RimM"/>
    <property type="match status" value="1"/>
</dbReference>
<dbReference type="Gene3D" id="2.30.30.240">
    <property type="entry name" value="PRC-barrel domain"/>
    <property type="match status" value="1"/>
</dbReference>
<dbReference type="Gene3D" id="2.40.30.60">
    <property type="entry name" value="RimM"/>
    <property type="match status" value="1"/>
</dbReference>
<dbReference type="HAMAP" id="MF_00014">
    <property type="entry name" value="Ribosome_mat_RimM"/>
    <property type="match status" value="1"/>
</dbReference>
<dbReference type="InterPro" id="IPR011033">
    <property type="entry name" value="PRC_barrel-like_sf"/>
</dbReference>
<dbReference type="InterPro" id="IPR056792">
    <property type="entry name" value="PRC_RimM"/>
</dbReference>
<dbReference type="InterPro" id="IPR011961">
    <property type="entry name" value="RimM"/>
</dbReference>
<dbReference type="InterPro" id="IPR002676">
    <property type="entry name" value="RimM_N"/>
</dbReference>
<dbReference type="InterPro" id="IPR036976">
    <property type="entry name" value="RimM_N_sf"/>
</dbReference>
<dbReference type="InterPro" id="IPR009000">
    <property type="entry name" value="Transl_B-barrel_sf"/>
</dbReference>
<dbReference type="NCBIfam" id="TIGR02273">
    <property type="entry name" value="16S_RimM"/>
    <property type="match status" value="1"/>
</dbReference>
<dbReference type="PANTHER" id="PTHR33692">
    <property type="entry name" value="RIBOSOME MATURATION FACTOR RIMM"/>
    <property type="match status" value="1"/>
</dbReference>
<dbReference type="PANTHER" id="PTHR33692:SF1">
    <property type="entry name" value="RIBOSOME MATURATION FACTOR RIMM"/>
    <property type="match status" value="1"/>
</dbReference>
<dbReference type="Pfam" id="PF24986">
    <property type="entry name" value="PRC_RimM"/>
    <property type="match status" value="1"/>
</dbReference>
<dbReference type="Pfam" id="PF01782">
    <property type="entry name" value="RimM"/>
    <property type="match status" value="1"/>
</dbReference>
<dbReference type="SUPFAM" id="SSF50346">
    <property type="entry name" value="PRC-barrel domain"/>
    <property type="match status" value="1"/>
</dbReference>
<dbReference type="SUPFAM" id="SSF50447">
    <property type="entry name" value="Translation proteins"/>
    <property type="match status" value="1"/>
</dbReference>
<organism>
    <name type="scientific">Escherichia coli O8 (strain IAI1)</name>
    <dbReference type="NCBI Taxonomy" id="585034"/>
    <lineage>
        <taxon>Bacteria</taxon>
        <taxon>Pseudomonadati</taxon>
        <taxon>Pseudomonadota</taxon>
        <taxon>Gammaproteobacteria</taxon>
        <taxon>Enterobacterales</taxon>
        <taxon>Enterobacteriaceae</taxon>
        <taxon>Escherichia</taxon>
    </lineage>
</organism>
<comment type="function">
    <text evidence="1">An accessory protein needed during the final step in the assembly of 30S ribosomal subunit, possibly for assembly of the head region. Essential for efficient processing of 16S rRNA. May be needed both before and after RbfA during the maturation of 16S rRNA. It has affinity for free ribosomal 30S subunits but not for 70S ribosomes.</text>
</comment>
<comment type="subunit">
    <text evidence="1">Binds ribosomal protein uS19.</text>
</comment>
<comment type="subcellular location">
    <subcellularLocation>
        <location evidence="1">Cytoplasm</location>
    </subcellularLocation>
</comment>
<comment type="domain">
    <text evidence="1">The PRC barrel domain binds ribosomal protein uS19.</text>
</comment>
<comment type="similarity">
    <text evidence="1">Belongs to the RimM family.</text>
</comment>